<sequence length="92" mass="10165">MARSVWKGPFVDLHLLKKAEAAQDAGSRAGPIKTWSRRSTIIPQFVGLTFNVYNGQKFIPVSVSEEMVGHKLGEFAPTRNFPGHAADKKGKR</sequence>
<name>RS19_NOVAD</name>
<reference key="1">
    <citation type="submission" date="2006-01" db="EMBL/GenBank/DDBJ databases">
        <title>Complete sequence of Novosphingobium aromaticivorans DSM 12444.</title>
        <authorList>
            <consortium name="US DOE Joint Genome Institute"/>
            <person name="Copeland A."/>
            <person name="Lucas S."/>
            <person name="Lapidus A."/>
            <person name="Barry K."/>
            <person name="Detter J.C."/>
            <person name="Glavina T."/>
            <person name="Hammon N."/>
            <person name="Israni S."/>
            <person name="Pitluck S."/>
            <person name="Chain P."/>
            <person name="Malfatti S."/>
            <person name="Shin M."/>
            <person name="Vergez L."/>
            <person name="Schmutz J."/>
            <person name="Larimer F."/>
            <person name="Land M."/>
            <person name="Kyrpides N."/>
            <person name="Ivanova N."/>
            <person name="Fredrickson J."/>
            <person name="Balkwill D."/>
            <person name="Romine M.F."/>
            <person name="Richardson P."/>
        </authorList>
    </citation>
    <scope>NUCLEOTIDE SEQUENCE [LARGE SCALE GENOMIC DNA]</scope>
    <source>
        <strain>ATCC 700278 / DSM 12444 / CCUG 56034 / CIP 105152 / NBRC 16084 / F199</strain>
    </source>
</reference>
<keyword id="KW-1185">Reference proteome</keyword>
<keyword id="KW-0687">Ribonucleoprotein</keyword>
<keyword id="KW-0689">Ribosomal protein</keyword>
<keyword id="KW-0694">RNA-binding</keyword>
<keyword id="KW-0699">rRNA-binding</keyword>
<evidence type="ECO:0000255" key="1">
    <source>
        <dbReference type="HAMAP-Rule" id="MF_00531"/>
    </source>
</evidence>
<evidence type="ECO:0000305" key="2"/>
<comment type="function">
    <text evidence="1">Protein S19 forms a complex with S13 that binds strongly to the 16S ribosomal RNA.</text>
</comment>
<comment type="similarity">
    <text evidence="1">Belongs to the universal ribosomal protein uS19 family.</text>
</comment>
<accession>Q2G8X6</accession>
<gene>
    <name evidence="1" type="primary">rpsS</name>
    <name type="ordered locus">Saro_1253</name>
</gene>
<organism>
    <name type="scientific">Novosphingobium aromaticivorans (strain ATCC 700278 / DSM 12444 / CCUG 56034 / CIP 105152 / NBRC 16084 / F199)</name>
    <dbReference type="NCBI Taxonomy" id="279238"/>
    <lineage>
        <taxon>Bacteria</taxon>
        <taxon>Pseudomonadati</taxon>
        <taxon>Pseudomonadota</taxon>
        <taxon>Alphaproteobacteria</taxon>
        <taxon>Sphingomonadales</taxon>
        <taxon>Sphingomonadaceae</taxon>
        <taxon>Novosphingobium</taxon>
    </lineage>
</organism>
<dbReference type="EMBL" id="CP000248">
    <property type="protein sequence ID" value="ABD25697.1"/>
    <property type="molecule type" value="Genomic_DNA"/>
</dbReference>
<dbReference type="RefSeq" id="WP_011444911.1">
    <property type="nucleotide sequence ID" value="NC_007794.1"/>
</dbReference>
<dbReference type="SMR" id="Q2G8X6"/>
<dbReference type="STRING" id="279238.Saro_1253"/>
<dbReference type="KEGG" id="nar:Saro_1253"/>
<dbReference type="eggNOG" id="COG0185">
    <property type="taxonomic scope" value="Bacteria"/>
</dbReference>
<dbReference type="HOGENOM" id="CLU_144911_0_1_5"/>
<dbReference type="Proteomes" id="UP000009134">
    <property type="component" value="Chromosome"/>
</dbReference>
<dbReference type="GO" id="GO:0005737">
    <property type="term" value="C:cytoplasm"/>
    <property type="evidence" value="ECO:0007669"/>
    <property type="project" value="UniProtKB-ARBA"/>
</dbReference>
<dbReference type="GO" id="GO:0015935">
    <property type="term" value="C:small ribosomal subunit"/>
    <property type="evidence" value="ECO:0007669"/>
    <property type="project" value="InterPro"/>
</dbReference>
<dbReference type="GO" id="GO:0019843">
    <property type="term" value="F:rRNA binding"/>
    <property type="evidence" value="ECO:0007669"/>
    <property type="project" value="UniProtKB-UniRule"/>
</dbReference>
<dbReference type="GO" id="GO:0003735">
    <property type="term" value="F:structural constituent of ribosome"/>
    <property type="evidence" value="ECO:0007669"/>
    <property type="project" value="InterPro"/>
</dbReference>
<dbReference type="GO" id="GO:0000028">
    <property type="term" value="P:ribosomal small subunit assembly"/>
    <property type="evidence" value="ECO:0007669"/>
    <property type="project" value="TreeGrafter"/>
</dbReference>
<dbReference type="GO" id="GO:0006412">
    <property type="term" value="P:translation"/>
    <property type="evidence" value="ECO:0007669"/>
    <property type="project" value="UniProtKB-UniRule"/>
</dbReference>
<dbReference type="FunFam" id="3.30.860.10:FF:000001">
    <property type="entry name" value="30S ribosomal protein S19"/>
    <property type="match status" value="1"/>
</dbReference>
<dbReference type="Gene3D" id="3.30.860.10">
    <property type="entry name" value="30s Ribosomal Protein S19, Chain A"/>
    <property type="match status" value="1"/>
</dbReference>
<dbReference type="HAMAP" id="MF_00531">
    <property type="entry name" value="Ribosomal_uS19"/>
    <property type="match status" value="1"/>
</dbReference>
<dbReference type="InterPro" id="IPR002222">
    <property type="entry name" value="Ribosomal_uS19"/>
</dbReference>
<dbReference type="InterPro" id="IPR005732">
    <property type="entry name" value="Ribosomal_uS19_bac-type"/>
</dbReference>
<dbReference type="InterPro" id="IPR020934">
    <property type="entry name" value="Ribosomal_uS19_CS"/>
</dbReference>
<dbReference type="InterPro" id="IPR023575">
    <property type="entry name" value="Ribosomal_uS19_SF"/>
</dbReference>
<dbReference type="NCBIfam" id="TIGR01050">
    <property type="entry name" value="rpsS_bact"/>
    <property type="match status" value="1"/>
</dbReference>
<dbReference type="PANTHER" id="PTHR11880">
    <property type="entry name" value="RIBOSOMAL PROTEIN S19P FAMILY MEMBER"/>
    <property type="match status" value="1"/>
</dbReference>
<dbReference type="PANTHER" id="PTHR11880:SF8">
    <property type="entry name" value="SMALL RIBOSOMAL SUBUNIT PROTEIN US19M"/>
    <property type="match status" value="1"/>
</dbReference>
<dbReference type="Pfam" id="PF00203">
    <property type="entry name" value="Ribosomal_S19"/>
    <property type="match status" value="1"/>
</dbReference>
<dbReference type="PIRSF" id="PIRSF002144">
    <property type="entry name" value="Ribosomal_S19"/>
    <property type="match status" value="1"/>
</dbReference>
<dbReference type="PRINTS" id="PR00975">
    <property type="entry name" value="RIBOSOMALS19"/>
</dbReference>
<dbReference type="SUPFAM" id="SSF54570">
    <property type="entry name" value="Ribosomal protein S19"/>
    <property type="match status" value="1"/>
</dbReference>
<dbReference type="PROSITE" id="PS00323">
    <property type="entry name" value="RIBOSOMAL_S19"/>
    <property type="match status" value="1"/>
</dbReference>
<proteinExistence type="inferred from homology"/>
<protein>
    <recommendedName>
        <fullName evidence="1">Small ribosomal subunit protein uS19</fullName>
    </recommendedName>
    <alternativeName>
        <fullName evidence="2">30S ribosomal protein S19</fullName>
    </alternativeName>
</protein>
<feature type="chain" id="PRO_0000265393" description="Small ribosomal subunit protein uS19">
    <location>
        <begin position="1"/>
        <end position="92"/>
    </location>
</feature>